<organism>
    <name type="scientific">Mycobacterium bovis (strain BCG / Tokyo 172 / ATCC 35737 / TMC 1019)</name>
    <dbReference type="NCBI Taxonomy" id="561275"/>
    <lineage>
        <taxon>Bacteria</taxon>
        <taxon>Bacillati</taxon>
        <taxon>Actinomycetota</taxon>
        <taxon>Actinomycetes</taxon>
        <taxon>Mycobacteriales</taxon>
        <taxon>Mycobacteriaceae</taxon>
        <taxon>Mycobacterium</taxon>
        <taxon>Mycobacterium tuberculosis complex</taxon>
    </lineage>
</organism>
<keyword id="KW-0963">Cytoplasm</keyword>
<keyword id="KW-0342">GTP-binding</keyword>
<keyword id="KW-0396">Initiation factor</keyword>
<keyword id="KW-0547">Nucleotide-binding</keyword>
<keyword id="KW-0648">Protein biosynthesis</keyword>
<evidence type="ECO:0000250" key="1"/>
<evidence type="ECO:0000255" key="2">
    <source>
        <dbReference type="HAMAP-Rule" id="MF_00100"/>
    </source>
</evidence>
<evidence type="ECO:0000256" key="3">
    <source>
        <dbReference type="SAM" id="MobiDB-lite"/>
    </source>
</evidence>
<sequence>MAAGKARVHELAKELGVTSKEVLARLSEQGEFVKSASSTVEAPVARRLRESFGGSKPAPAKGTAKSPGKGPDKSLDKALDAAIDMAAGNGKATAAPAKAADSGGAAIVSPTTPAAPEPPTAVPPSPQAPHPGMAPGARPGPVPKPGIRTPRVGNNPFSSAQPADRPIPRPPAPRPGTARPGVPRPGASPGSMPPRPGGAVGGARPPRPGAPRPGGRPGAPGAGRSDAGGGNYRGGGVGAAPGTGFRGRPGGGGGGRPGQRGGAAGAFGRPGGAPRRGRKSKRQKRQEYDSMQAPVVGGVRLPHGNGETIRLARGASLSDFADKIDANPAALVQALFNLGEMVTATQSVGDETLELLGSEMNYNVQVVSPEDEDRELLESFDLSYGEDEGGEEDLQVRPPVVTVMGHVDHGKTRLLDTIRKANVREAEAGGITQHIGAYQVAVDLDGSQRLITFIDTPGHEAFTAMRARGAKATDIAILVVAADDGVMPQTVEAINHAQAADVPIVVAVNKIDKEGADPAKIRGQLTEYGLVPEEFGGDTMFVDISAKQGTNIEALEEAVLLTADAALDLRANPDMEAQGVAIEAHLDRGRGPVATVLVQRGTLRVGDSVVAGDAYGRVRRMVDEHGEDVEVALPSRPVQVIGFTSVPGAGDNFLVVDEDRIARQIADRRSARKRNALAARSRKRISLEDLDSALKETSQLNLILKGDNAGTVEALEEALMGIQVDDEVVLRVIDRGVGGITETNVNLASASDAVIIGFNVRAEGKATELASREGVEIRYYSVIYQAIDEIEQALRGLLKPIYEENQLGRAEIRALFRSSKVGLIAGCLVTSGVMRRNAKARLLRDNIVVAENLSIASLRREKDDVTEVRDGFECGLTLGYADIKEGDVIESYELVQKERA</sequence>
<accession>C1AFV3</accession>
<reference key="1">
    <citation type="journal article" date="2009" name="Vaccine">
        <title>Whole genome sequence analysis of Mycobacterium bovis bacillus Calmette-Guerin (BCG) Tokyo 172: a comparative study of BCG vaccine substrains.</title>
        <authorList>
            <person name="Seki M."/>
            <person name="Honda I."/>
            <person name="Fujita I."/>
            <person name="Yano I."/>
            <person name="Yamamoto S."/>
            <person name="Koyama A."/>
        </authorList>
    </citation>
    <scope>NUCLEOTIDE SEQUENCE [LARGE SCALE GENOMIC DNA]</scope>
    <source>
        <strain>BCG / Tokyo 172 / ATCC 35737 / TMC 1019</strain>
    </source>
</reference>
<proteinExistence type="inferred from homology"/>
<gene>
    <name evidence="2" type="primary">infB</name>
    <name type="ordered locus">JTY_2854</name>
</gene>
<comment type="function">
    <text evidence="2">One of the essential components for the initiation of protein synthesis. Protects formylmethionyl-tRNA from spontaneous hydrolysis and promotes its binding to the 30S ribosomal subunits. Also involved in the hydrolysis of GTP during the formation of the 70S ribosomal complex.</text>
</comment>
<comment type="subcellular location">
    <subcellularLocation>
        <location evidence="2">Cytoplasm</location>
    </subcellularLocation>
</comment>
<comment type="similarity">
    <text evidence="2">Belongs to the TRAFAC class translation factor GTPase superfamily. Classic translation factor GTPase family. IF-2 subfamily.</text>
</comment>
<dbReference type="EMBL" id="AP010918">
    <property type="protein sequence ID" value="BAH27132.1"/>
    <property type="molecule type" value="Genomic_DNA"/>
</dbReference>
<dbReference type="RefSeq" id="WP_003899505.1">
    <property type="nucleotide sequence ID" value="NZ_CP014566.1"/>
</dbReference>
<dbReference type="SMR" id="C1AFV3"/>
<dbReference type="GeneID" id="45426826"/>
<dbReference type="KEGG" id="mbt:JTY_2854"/>
<dbReference type="HOGENOM" id="CLU_006301_9_2_11"/>
<dbReference type="GO" id="GO:0005829">
    <property type="term" value="C:cytosol"/>
    <property type="evidence" value="ECO:0007669"/>
    <property type="project" value="TreeGrafter"/>
</dbReference>
<dbReference type="GO" id="GO:0005525">
    <property type="term" value="F:GTP binding"/>
    <property type="evidence" value="ECO:0007669"/>
    <property type="project" value="UniProtKB-KW"/>
</dbReference>
<dbReference type="GO" id="GO:0003924">
    <property type="term" value="F:GTPase activity"/>
    <property type="evidence" value="ECO:0007669"/>
    <property type="project" value="UniProtKB-UniRule"/>
</dbReference>
<dbReference type="GO" id="GO:0003743">
    <property type="term" value="F:translation initiation factor activity"/>
    <property type="evidence" value="ECO:0007669"/>
    <property type="project" value="UniProtKB-UniRule"/>
</dbReference>
<dbReference type="CDD" id="cd01887">
    <property type="entry name" value="IF2_eIF5B"/>
    <property type="match status" value="1"/>
</dbReference>
<dbReference type="CDD" id="cd03702">
    <property type="entry name" value="IF2_mtIF2_II"/>
    <property type="match status" value="1"/>
</dbReference>
<dbReference type="CDD" id="cd03692">
    <property type="entry name" value="mtIF2_IVc"/>
    <property type="match status" value="1"/>
</dbReference>
<dbReference type="FunFam" id="1.10.10.2480:FF:000003">
    <property type="entry name" value="Translation initiation factor IF-2"/>
    <property type="match status" value="1"/>
</dbReference>
<dbReference type="FunFam" id="2.40.30.10:FF:000007">
    <property type="entry name" value="Translation initiation factor IF-2"/>
    <property type="match status" value="1"/>
</dbReference>
<dbReference type="FunFam" id="2.40.30.10:FF:000008">
    <property type="entry name" value="Translation initiation factor IF-2"/>
    <property type="match status" value="1"/>
</dbReference>
<dbReference type="FunFam" id="3.40.50.10050:FF:000001">
    <property type="entry name" value="Translation initiation factor IF-2"/>
    <property type="match status" value="1"/>
</dbReference>
<dbReference type="FunFam" id="3.40.50.300:FF:000019">
    <property type="entry name" value="Translation initiation factor IF-2"/>
    <property type="match status" value="1"/>
</dbReference>
<dbReference type="Gene3D" id="1.10.10.2480">
    <property type="match status" value="1"/>
</dbReference>
<dbReference type="Gene3D" id="3.40.50.300">
    <property type="entry name" value="P-loop containing nucleotide triphosphate hydrolases"/>
    <property type="match status" value="1"/>
</dbReference>
<dbReference type="Gene3D" id="2.40.30.10">
    <property type="entry name" value="Translation factors"/>
    <property type="match status" value="2"/>
</dbReference>
<dbReference type="Gene3D" id="3.40.50.10050">
    <property type="entry name" value="Translation initiation factor IF- 2, domain 3"/>
    <property type="match status" value="1"/>
</dbReference>
<dbReference type="HAMAP" id="MF_00100_B">
    <property type="entry name" value="IF_2_B"/>
    <property type="match status" value="1"/>
</dbReference>
<dbReference type="InterPro" id="IPR053905">
    <property type="entry name" value="EF-G-like_DII"/>
</dbReference>
<dbReference type="InterPro" id="IPR044145">
    <property type="entry name" value="IF2_II"/>
</dbReference>
<dbReference type="InterPro" id="IPR006847">
    <property type="entry name" value="IF2_N"/>
</dbReference>
<dbReference type="InterPro" id="IPR027417">
    <property type="entry name" value="P-loop_NTPase"/>
</dbReference>
<dbReference type="InterPro" id="IPR005225">
    <property type="entry name" value="Small_GTP-bd"/>
</dbReference>
<dbReference type="InterPro" id="IPR000795">
    <property type="entry name" value="T_Tr_GTP-bd_dom"/>
</dbReference>
<dbReference type="InterPro" id="IPR000178">
    <property type="entry name" value="TF_IF2_bacterial-like"/>
</dbReference>
<dbReference type="InterPro" id="IPR015760">
    <property type="entry name" value="TIF_IF2"/>
</dbReference>
<dbReference type="InterPro" id="IPR023115">
    <property type="entry name" value="TIF_IF2_dom3"/>
</dbReference>
<dbReference type="InterPro" id="IPR036925">
    <property type="entry name" value="TIF_IF2_dom3_sf"/>
</dbReference>
<dbReference type="InterPro" id="IPR009000">
    <property type="entry name" value="Transl_B-barrel_sf"/>
</dbReference>
<dbReference type="NCBIfam" id="TIGR00487">
    <property type="entry name" value="IF-2"/>
    <property type="match status" value="1"/>
</dbReference>
<dbReference type="NCBIfam" id="TIGR00231">
    <property type="entry name" value="small_GTP"/>
    <property type="match status" value="1"/>
</dbReference>
<dbReference type="PANTHER" id="PTHR43381:SF5">
    <property type="entry name" value="TR-TYPE G DOMAIN-CONTAINING PROTEIN"/>
    <property type="match status" value="1"/>
</dbReference>
<dbReference type="PANTHER" id="PTHR43381">
    <property type="entry name" value="TRANSLATION INITIATION FACTOR IF-2-RELATED"/>
    <property type="match status" value="1"/>
</dbReference>
<dbReference type="Pfam" id="PF22042">
    <property type="entry name" value="EF-G_D2"/>
    <property type="match status" value="1"/>
</dbReference>
<dbReference type="Pfam" id="PF00009">
    <property type="entry name" value="GTP_EFTU"/>
    <property type="match status" value="1"/>
</dbReference>
<dbReference type="Pfam" id="PF11987">
    <property type="entry name" value="IF-2"/>
    <property type="match status" value="1"/>
</dbReference>
<dbReference type="Pfam" id="PF04760">
    <property type="entry name" value="IF2_N"/>
    <property type="match status" value="2"/>
</dbReference>
<dbReference type="PRINTS" id="PR00315">
    <property type="entry name" value="ELONGATNFCT"/>
</dbReference>
<dbReference type="SUPFAM" id="SSF52156">
    <property type="entry name" value="Initiation factor IF2/eIF5b, domain 3"/>
    <property type="match status" value="1"/>
</dbReference>
<dbReference type="SUPFAM" id="SSF52540">
    <property type="entry name" value="P-loop containing nucleoside triphosphate hydrolases"/>
    <property type="match status" value="1"/>
</dbReference>
<dbReference type="SUPFAM" id="SSF50447">
    <property type="entry name" value="Translation proteins"/>
    <property type="match status" value="2"/>
</dbReference>
<dbReference type="PROSITE" id="PS51722">
    <property type="entry name" value="G_TR_2"/>
    <property type="match status" value="1"/>
</dbReference>
<dbReference type="PROSITE" id="PS01176">
    <property type="entry name" value="IF2"/>
    <property type="match status" value="1"/>
</dbReference>
<protein>
    <recommendedName>
        <fullName evidence="2">Translation initiation factor IF-2</fullName>
    </recommendedName>
</protein>
<name>IF2_MYCBT</name>
<feature type="chain" id="PRO_1000118768" description="Translation initiation factor IF-2">
    <location>
        <begin position="1"/>
        <end position="900"/>
    </location>
</feature>
<feature type="domain" description="tr-type G">
    <location>
        <begin position="396"/>
        <end position="567"/>
    </location>
</feature>
<feature type="region of interest" description="Disordered" evidence="3">
    <location>
        <begin position="30"/>
        <end position="77"/>
    </location>
</feature>
<feature type="region of interest" description="Disordered" evidence="3">
    <location>
        <begin position="89"/>
        <end position="291"/>
    </location>
</feature>
<feature type="region of interest" description="G1" evidence="1">
    <location>
        <begin position="405"/>
        <end position="412"/>
    </location>
</feature>
<feature type="region of interest" description="G2" evidence="1">
    <location>
        <begin position="430"/>
        <end position="434"/>
    </location>
</feature>
<feature type="region of interest" description="G3" evidence="1">
    <location>
        <begin position="455"/>
        <end position="458"/>
    </location>
</feature>
<feature type="region of interest" description="G4" evidence="1">
    <location>
        <begin position="509"/>
        <end position="512"/>
    </location>
</feature>
<feature type="region of interest" description="G5" evidence="1">
    <location>
        <begin position="545"/>
        <end position="547"/>
    </location>
</feature>
<feature type="compositionally biased region" description="Low complexity" evidence="3">
    <location>
        <begin position="89"/>
        <end position="112"/>
    </location>
</feature>
<feature type="compositionally biased region" description="Pro residues" evidence="3">
    <location>
        <begin position="113"/>
        <end position="129"/>
    </location>
</feature>
<feature type="compositionally biased region" description="Low complexity" evidence="3">
    <location>
        <begin position="175"/>
        <end position="187"/>
    </location>
</feature>
<feature type="compositionally biased region" description="Gly residues" evidence="3">
    <location>
        <begin position="215"/>
        <end position="271"/>
    </location>
</feature>
<feature type="compositionally biased region" description="Basic residues" evidence="3">
    <location>
        <begin position="275"/>
        <end position="284"/>
    </location>
</feature>
<feature type="binding site" evidence="2">
    <location>
        <begin position="405"/>
        <end position="412"/>
    </location>
    <ligand>
        <name>GTP</name>
        <dbReference type="ChEBI" id="CHEBI:37565"/>
    </ligand>
</feature>
<feature type="binding site" evidence="2">
    <location>
        <begin position="455"/>
        <end position="459"/>
    </location>
    <ligand>
        <name>GTP</name>
        <dbReference type="ChEBI" id="CHEBI:37565"/>
    </ligand>
</feature>
<feature type="binding site" evidence="2">
    <location>
        <begin position="509"/>
        <end position="512"/>
    </location>
    <ligand>
        <name>GTP</name>
        <dbReference type="ChEBI" id="CHEBI:37565"/>
    </ligand>
</feature>